<protein>
    <recommendedName>
        <fullName evidence="1">Deoxyuridine 5'-triphosphate nucleotidohydrolase</fullName>
        <shortName evidence="1">dUTPase</shortName>
        <ecNumber evidence="1">3.6.1.23</ecNumber>
    </recommendedName>
    <alternativeName>
        <fullName evidence="1">dUTP pyrophosphatase</fullName>
    </alternativeName>
</protein>
<organism>
    <name type="scientific">Pseudomonas putida (strain ATCC 700007 / DSM 6899 / JCM 31910 / BCRC 17059 / LMG 24140 / F1)</name>
    <dbReference type="NCBI Taxonomy" id="351746"/>
    <lineage>
        <taxon>Bacteria</taxon>
        <taxon>Pseudomonadati</taxon>
        <taxon>Pseudomonadota</taxon>
        <taxon>Gammaproteobacteria</taxon>
        <taxon>Pseudomonadales</taxon>
        <taxon>Pseudomonadaceae</taxon>
        <taxon>Pseudomonas</taxon>
    </lineage>
</organism>
<name>DUT_PSEP1</name>
<gene>
    <name evidence="1" type="primary">dut</name>
    <name type="ordered locus">Pput_5196</name>
</gene>
<comment type="function">
    <text evidence="1">This enzyme is involved in nucleotide metabolism: it produces dUMP, the immediate precursor of thymidine nucleotides and it decreases the intracellular concentration of dUTP so that uracil cannot be incorporated into DNA.</text>
</comment>
<comment type="catalytic activity">
    <reaction evidence="1">
        <text>dUTP + H2O = dUMP + diphosphate + H(+)</text>
        <dbReference type="Rhea" id="RHEA:10248"/>
        <dbReference type="ChEBI" id="CHEBI:15377"/>
        <dbReference type="ChEBI" id="CHEBI:15378"/>
        <dbReference type="ChEBI" id="CHEBI:33019"/>
        <dbReference type="ChEBI" id="CHEBI:61555"/>
        <dbReference type="ChEBI" id="CHEBI:246422"/>
        <dbReference type="EC" id="3.6.1.23"/>
    </reaction>
</comment>
<comment type="cofactor">
    <cofactor evidence="1">
        <name>Mg(2+)</name>
        <dbReference type="ChEBI" id="CHEBI:18420"/>
    </cofactor>
</comment>
<comment type="pathway">
    <text evidence="1">Pyrimidine metabolism; dUMP biosynthesis; dUMP from dCTP (dUTP route): step 2/2.</text>
</comment>
<comment type="similarity">
    <text evidence="1">Belongs to the dUTPase family.</text>
</comment>
<proteinExistence type="inferred from homology"/>
<keyword id="KW-0378">Hydrolase</keyword>
<keyword id="KW-0460">Magnesium</keyword>
<keyword id="KW-0479">Metal-binding</keyword>
<keyword id="KW-0546">Nucleotide metabolism</keyword>
<accession>A5WB04</accession>
<sequence>MHALQAKILDPRLGSEFPLPAYATPGSAGLDLRALLKEDTLLEPGQTILIPTGLSIYIGDPGLAAVILPRSGLGHKHGIVLGNLVGLIDSDYQGELMVSCWNRGNTPFTIAVGERIAQLVLVPVVQAHFDIVEAFDESQRGAGGFGHSGSH</sequence>
<feature type="chain" id="PRO_1000015497" description="Deoxyuridine 5'-triphosphate nucleotidohydrolase">
    <location>
        <begin position="1"/>
        <end position="151"/>
    </location>
</feature>
<feature type="binding site" evidence="1">
    <location>
        <begin position="70"/>
        <end position="72"/>
    </location>
    <ligand>
        <name>substrate</name>
    </ligand>
</feature>
<feature type="binding site" evidence="1">
    <location>
        <position position="83"/>
    </location>
    <ligand>
        <name>substrate</name>
    </ligand>
</feature>
<feature type="binding site" evidence="1">
    <location>
        <begin position="87"/>
        <end position="89"/>
    </location>
    <ligand>
        <name>substrate</name>
    </ligand>
</feature>
<feature type="binding site" evidence="1">
    <location>
        <position position="97"/>
    </location>
    <ligand>
        <name>substrate</name>
    </ligand>
</feature>
<evidence type="ECO:0000255" key="1">
    <source>
        <dbReference type="HAMAP-Rule" id="MF_00116"/>
    </source>
</evidence>
<reference key="1">
    <citation type="submission" date="2007-05" db="EMBL/GenBank/DDBJ databases">
        <title>Complete sequence of Pseudomonas putida F1.</title>
        <authorList>
            <consortium name="US DOE Joint Genome Institute"/>
            <person name="Copeland A."/>
            <person name="Lucas S."/>
            <person name="Lapidus A."/>
            <person name="Barry K."/>
            <person name="Detter J.C."/>
            <person name="Glavina del Rio T."/>
            <person name="Hammon N."/>
            <person name="Israni S."/>
            <person name="Dalin E."/>
            <person name="Tice H."/>
            <person name="Pitluck S."/>
            <person name="Chain P."/>
            <person name="Malfatti S."/>
            <person name="Shin M."/>
            <person name="Vergez L."/>
            <person name="Schmutz J."/>
            <person name="Larimer F."/>
            <person name="Land M."/>
            <person name="Hauser L."/>
            <person name="Kyrpides N."/>
            <person name="Lykidis A."/>
            <person name="Parales R."/>
            <person name="Richardson P."/>
        </authorList>
    </citation>
    <scope>NUCLEOTIDE SEQUENCE [LARGE SCALE GENOMIC DNA]</scope>
    <source>
        <strain>ATCC 700007 / DSM 6899 / JCM 31910 / BCRC 17059 / LMG 24140 / F1</strain>
    </source>
</reference>
<dbReference type="EC" id="3.6.1.23" evidence="1"/>
<dbReference type="EMBL" id="CP000712">
    <property type="protein sequence ID" value="ABQ81314.1"/>
    <property type="molecule type" value="Genomic_DNA"/>
</dbReference>
<dbReference type="SMR" id="A5WB04"/>
<dbReference type="KEGG" id="ppf:Pput_5196"/>
<dbReference type="eggNOG" id="COG0756">
    <property type="taxonomic scope" value="Bacteria"/>
</dbReference>
<dbReference type="HOGENOM" id="CLU_068508_1_1_6"/>
<dbReference type="UniPathway" id="UPA00610">
    <property type="reaction ID" value="UER00666"/>
</dbReference>
<dbReference type="GO" id="GO:0004170">
    <property type="term" value="F:dUTP diphosphatase activity"/>
    <property type="evidence" value="ECO:0007669"/>
    <property type="project" value="UniProtKB-UniRule"/>
</dbReference>
<dbReference type="GO" id="GO:0000287">
    <property type="term" value="F:magnesium ion binding"/>
    <property type="evidence" value="ECO:0007669"/>
    <property type="project" value="UniProtKB-UniRule"/>
</dbReference>
<dbReference type="GO" id="GO:0006226">
    <property type="term" value="P:dUMP biosynthetic process"/>
    <property type="evidence" value="ECO:0007669"/>
    <property type="project" value="UniProtKB-UniRule"/>
</dbReference>
<dbReference type="GO" id="GO:0046081">
    <property type="term" value="P:dUTP catabolic process"/>
    <property type="evidence" value="ECO:0007669"/>
    <property type="project" value="InterPro"/>
</dbReference>
<dbReference type="CDD" id="cd07557">
    <property type="entry name" value="trimeric_dUTPase"/>
    <property type="match status" value="1"/>
</dbReference>
<dbReference type="FunFam" id="2.70.40.10:FF:000002">
    <property type="entry name" value="dUTP diphosphatase"/>
    <property type="match status" value="1"/>
</dbReference>
<dbReference type="Gene3D" id="2.70.40.10">
    <property type="match status" value="1"/>
</dbReference>
<dbReference type="HAMAP" id="MF_00116">
    <property type="entry name" value="dUTPase_bact"/>
    <property type="match status" value="1"/>
</dbReference>
<dbReference type="InterPro" id="IPR008181">
    <property type="entry name" value="dUTPase"/>
</dbReference>
<dbReference type="InterPro" id="IPR029054">
    <property type="entry name" value="dUTPase-like"/>
</dbReference>
<dbReference type="InterPro" id="IPR036157">
    <property type="entry name" value="dUTPase-like_sf"/>
</dbReference>
<dbReference type="InterPro" id="IPR033704">
    <property type="entry name" value="dUTPase_trimeric"/>
</dbReference>
<dbReference type="NCBIfam" id="TIGR00576">
    <property type="entry name" value="dut"/>
    <property type="match status" value="1"/>
</dbReference>
<dbReference type="NCBIfam" id="NF001862">
    <property type="entry name" value="PRK00601.1"/>
    <property type="match status" value="1"/>
</dbReference>
<dbReference type="PANTHER" id="PTHR11241">
    <property type="entry name" value="DEOXYURIDINE 5'-TRIPHOSPHATE NUCLEOTIDOHYDROLASE"/>
    <property type="match status" value="1"/>
</dbReference>
<dbReference type="PANTHER" id="PTHR11241:SF0">
    <property type="entry name" value="DEOXYURIDINE 5'-TRIPHOSPHATE NUCLEOTIDOHYDROLASE"/>
    <property type="match status" value="1"/>
</dbReference>
<dbReference type="Pfam" id="PF00692">
    <property type="entry name" value="dUTPase"/>
    <property type="match status" value="1"/>
</dbReference>
<dbReference type="SUPFAM" id="SSF51283">
    <property type="entry name" value="dUTPase-like"/>
    <property type="match status" value="1"/>
</dbReference>